<evidence type="ECO:0000255" key="1">
    <source>
        <dbReference type="HAMAP-Rule" id="MF_00188"/>
    </source>
</evidence>
<name>HTPX_PYRIL</name>
<accession>A1RT82</accession>
<dbReference type="EC" id="3.4.24.-" evidence="1"/>
<dbReference type="EMBL" id="CP000504">
    <property type="protein sequence ID" value="ABL88164.1"/>
    <property type="molecule type" value="Genomic_DNA"/>
</dbReference>
<dbReference type="RefSeq" id="WP_011762739.1">
    <property type="nucleotide sequence ID" value="NC_008701.1"/>
</dbReference>
<dbReference type="STRING" id="384616.Pisl_0989"/>
<dbReference type="GeneID" id="4616863"/>
<dbReference type="KEGG" id="pis:Pisl_0989"/>
<dbReference type="eggNOG" id="arCOG01331">
    <property type="taxonomic scope" value="Archaea"/>
</dbReference>
<dbReference type="HOGENOM" id="CLU_042266_4_2_2"/>
<dbReference type="OrthoDB" id="28389at2157"/>
<dbReference type="Proteomes" id="UP000002595">
    <property type="component" value="Chromosome"/>
</dbReference>
<dbReference type="GO" id="GO:0005886">
    <property type="term" value="C:plasma membrane"/>
    <property type="evidence" value="ECO:0007669"/>
    <property type="project" value="UniProtKB-SubCell"/>
</dbReference>
<dbReference type="GO" id="GO:0004222">
    <property type="term" value="F:metalloendopeptidase activity"/>
    <property type="evidence" value="ECO:0007669"/>
    <property type="project" value="UniProtKB-UniRule"/>
</dbReference>
<dbReference type="GO" id="GO:0008270">
    <property type="term" value="F:zinc ion binding"/>
    <property type="evidence" value="ECO:0007669"/>
    <property type="project" value="UniProtKB-UniRule"/>
</dbReference>
<dbReference type="GO" id="GO:0006508">
    <property type="term" value="P:proteolysis"/>
    <property type="evidence" value="ECO:0007669"/>
    <property type="project" value="UniProtKB-KW"/>
</dbReference>
<dbReference type="CDD" id="cd07338">
    <property type="entry name" value="M48B_HtpX_like"/>
    <property type="match status" value="1"/>
</dbReference>
<dbReference type="Gene3D" id="3.30.2010.10">
    <property type="entry name" value="Metalloproteases ('zincins'), catalytic domain"/>
    <property type="match status" value="1"/>
</dbReference>
<dbReference type="HAMAP" id="MF_00188">
    <property type="entry name" value="Pept_M48_protease_HtpX"/>
    <property type="match status" value="1"/>
</dbReference>
<dbReference type="InterPro" id="IPR050083">
    <property type="entry name" value="HtpX_protease"/>
</dbReference>
<dbReference type="InterPro" id="IPR022919">
    <property type="entry name" value="Pept_M48_protease_HtpX"/>
</dbReference>
<dbReference type="InterPro" id="IPR001915">
    <property type="entry name" value="Peptidase_M48"/>
</dbReference>
<dbReference type="PANTHER" id="PTHR43221">
    <property type="entry name" value="PROTEASE HTPX"/>
    <property type="match status" value="1"/>
</dbReference>
<dbReference type="PANTHER" id="PTHR43221:SF2">
    <property type="entry name" value="PROTEASE HTPX HOMOLOG"/>
    <property type="match status" value="1"/>
</dbReference>
<dbReference type="Pfam" id="PF01435">
    <property type="entry name" value="Peptidase_M48"/>
    <property type="match status" value="1"/>
</dbReference>
<dbReference type="PROSITE" id="PS00142">
    <property type="entry name" value="ZINC_PROTEASE"/>
    <property type="match status" value="1"/>
</dbReference>
<keyword id="KW-1003">Cell membrane</keyword>
<keyword id="KW-0378">Hydrolase</keyword>
<keyword id="KW-0472">Membrane</keyword>
<keyword id="KW-0479">Metal-binding</keyword>
<keyword id="KW-0482">Metalloprotease</keyword>
<keyword id="KW-0645">Protease</keyword>
<keyword id="KW-0812">Transmembrane</keyword>
<keyword id="KW-1133">Transmembrane helix</keyword>
<keyword id="KW-0862">Zinc</keyword>
<feature type="chain" id="PRO_1000020920" description="Protease HtpX homolog">
    <location>
        <begin position="1"/>
        <end position="347"/>
    </location>
</feature>
<feature type="transmembrane region" description="Helical" evidence="1">
    <location>
        <begin position="8"/>
        <end position="28"/>
    </location>
</feature>
<feature type="transmembrane region" description="Helical" evidence="1">
    <location>
        <begin position="46"/>
        <end position="66"/>
    </location>
</feature>
<feature type="transmembrane region" description="Helical" evidence="1">
    <location>
        <begin position="76"/>
        <end position="96"/>
    </location>
</feature>
<feature type="transmembrane region" description="Helical" evidence="1">
    <location>
        <begin position="185"/>
        <end position="205"/>
    </location>
</feature>
<feature type="transmembrane region" description="Helical" evidence="1">
    <location>
        <begin position="221"/>
        <end position="241"/>
    </location>
</feature>
<feature type="active site" evidence="1">
    <location>
        <position position="175"/>
    </location>
</feature>
<feature type="binding site" evidence="1">
    <location>
        <position position="174"/>
    </location>
    <ligand>
        <name>Zn(2+)</name>
        <dbReference type="ChEBI" id="CHEBI:29105"/>
        <note>catalytic</note>
    </ligand>
</feature>
<feature type="binding site" evidence="1">
    <location>
        <position position="178"/>
    </location>
    <ligand>
        <name>Zn(2+)</name>
        <dbReference type="ChEBI" id="CHEBI:29105"/>
        <note>catalytic</note>
    </ligand>
</feature>
<feature type="binding site" evidence="1">
    <location>
        <position position="248"/>
    </location>
    <ligand>
        <name>Zn(2+)</name>
        <dbReference type="ChEBI" id="CHEBI:29105"/>
        <note>catalytic</note>
    </ligand>
</feature>
<protein>
    <recommendedName>
        <fullName evidence="1">Protease HtpX homolog</fullName>
        <ecNumber evidence="1">3.4.24.-</ecNumber>
    </recommendedName>
</protein>
<gene>
    <name evidence="1" type="primary">htpX</name>
    <name type="ordered locus">Pisl_0989</name>
</gene>
<organism>
    <name type="scientific">Pyrobaculum islandicum (strain DSM 4184 / JCM 9189 / GEO3)</name>
    <dbReference type="NCBI Taxonomy" id="384616"/>
    <lineage>
        <taxon>Archaea</taxon>
        <taxon>Thermoproteota</taxon>
        <taxon>Thermoprotei</taxon>
        <taxon>Thermoproteales</taxon>
        <taxon>Thermoproteaceae</taxon>
        <taxon>Pyrobaculum</taxon>
    </lineage>
</organism>
<comment type="cofactor">
    <cofactor evidence="1">
        <name>Zn(2+)</name>
        <dbReference type="ChEBI" id="CHEBI:29105"/>
    </cofactor>
    <text evidence="1">Binds 1 zinc ion per subunit.</text>
</comment>
<comment type="subcellular location">
    <subcellularLocation>
        <location evidence="1">Cell membrane</location>
        <topology evidence="1">Multi-pass membrane protein</topology>
    </subcellularLocation>
</comment>
<comment type="similarity">
    <text evidence="1">Belongs to the peptidase M48B family.</text>
</comment>
<sequence length="347" mass="38085">MFPIFDPIAFGLYLLGYIVMIIVAVVIAPKVASSISGRFTLYGAMALTAVLIVLTTAFVIYLIAIVAAPALAEYGWGFILGMIFFVVLMNLITYIASPFLINVTYGARPDPRLQEIVDAVASRLGAPFRIKAVVVDGPPNAFAYGNFLTGRYVAVTSSMLALTDKRELEAVIGHEIGHHLHRDNALMLLFGVLPSILYYLGVSSVRIALSSSNNRNNNTMLLAAVGILAVVVSFLVQLLVLAFSRLREYYADTAGAKAAGKEAMQFALAKIHKFYFSNPEAHEIISGDKFRALFIYALVNAVANPFITVTRSEIEEIKRSSYSVIQEIFSTHPPIPKRLRFLDQLQI</sequence>
<proteinExistence type="inferred from homology"/>
<reference key="1">
    <citation type="submission" date="2006-12" db="EMBL/GenBank/DDBJ databases">
        <title>Complete sequence of Pyrobaculum islandicum DSM 4184.</title>
        <authorList>
            <person name="Copeland A."/>
            <person name="Lucas S."/>
            <person name="Lapidus A."/>
            <person name="Barry K."/>
            <person name="Detter J.C."/>
            <person name="Glavina del Rio T."/>
            <person name="Dalin E."/>
            <person name="Tice H."/>
            <person name="Pitluck S."/>
            <person name="Meincke L."/>
            <person name="Brettin T."/>
            <person name="Bruce D."/>
            <person name="Han C."/>
            <person name="Tapia R."/>
            <person name="Gilna P."/>
            <person name="Schmutz J."/>
            <person name="Larimer F."/>
            <person name="Land M."/>
            <person name="Hauser L."/>
            <person name="Kyrpides N."/>
            <person name="Mikhailova N."/>
            <person name="Cozen A.E."/>
            <person name="Fitz-Gibbon S.T."/>
            <person name="House C.H."/>
            <person name="Saltikov C."/>
            <person name="Lowe T."/>
            <person name="Richardson P."/>
        </authorList>
    </citation>
    <scope>NUCLEOTIDE SEQUENCE [LARGE SCALE GENOMIC DNA]</scope>
    <source>
        <strain>DSM 4184 / JCM 9189 / GEO3</strain>
    </source>
</reference>